<proteinExistence type="inferred from homology"/>
<name>CCME_CAUVN</name>
<sequence>MSFWPQSRKARRRLTILLAIAPVLALAVGLALYGLRDSISLFYTPAQAQEAKVSAGRKVQLGGLVQHGSVVKYPDGNVEFVIADQKATAKVVYHGDLPDLFREGQGIVAEGSFNPAGVFEAKLVLAKHDERYMPREVSKALKEQGEWRGEGADAPAYGSQKP</sequence>
<accession>B8H1L5</accession>
<organism>
    <name type="scientific">Caulobacter vibrioides (strain NA1000 / CB15N)</name>
    <name type="common">Caulobacter crescentus</name>
    <dbReference type="NCBI Taxonomy" id="565050"/>
    <lineage>
        <taxon>Bacteria</taxon>
        <taxon>Pseudomonadati</taxon>
        <taxon>Pseudomonadota</taxon>
        <taxon>Alphaproteobacteria</taxon>
        <taxon>Caulobacterales</taxon>
        <taxon>Caulobacteraceae</taxon>
        <taxon>Caulobacter</taxon>
    </lineage>
</organism>
<comment type="function">
    <text evidence="1">Heme chaperone required for the biogenesis of c-type cytochromes. Transiently binds heme delivered by CcmC and transfers the heme to apo-cytochromes in a process facilitated by CcmF and CcmH.</text>
</comment>
<comment type="subcellular location">
    <subcellularLocation>
        <location evidence="1">Cell inner membrane</location>
        <topology evidence="1">Single-pass type II membrane protein</topology>
        <orientation evidence="1">Periplasmic side</orientation>
    </subcellularLocation>
</comment>
<comment type="similarity">
    <text evidence="1">Belongs to the CcmE/CycJ family.</text>
</comment>
<protein>
    <recommendedName>
        <fullName evidence="1">Cytochrome c-type biogenesis protein CcmE</fullName>
    </recommendedName>
    <alternativeName>
        <fullName evidence="1">Cytochrome c maturation protein E</fullName>
    </alternativeName>
    <alternativeName>
        <fullName evidence="1">Heme chaperone CcmE</fullName>
    </alternativeName>
</protein>
<gene>
    <name evidence="1" type="primary">ccmE</name>
    <name evidence="1" type="synonym">cycJ</name>
    <name type="ordered locus">CCNA_02849</name>
</gene>
<feature type="chain" id="PRO_1000189009" description="Cytochrome c-type biogenesis protein CcmE">
    <location>
        <begin position="1"/>
        <end position="162"/>
    </location>
</feature>
<feature type="topological domain" description="Cytoplasmic" evidence="1">
    <location>
        <begin position="1"/>
        <end position="13"/>
    </location>
</feature>
<feature type="transmembrane region" description="Helical; Signal-anchor for type II membrane protein" evidence="1">
    <location>
        <begin position="14"/>
        <end position="34"/>
    </location>
</feature>
<feature type="topological domain" description="Periplasmic" evidence="1">
    <location>
        <begin position="35"/>
        <end position="162"/>
    </location>
</feature>
<feature type="region of interest" description="Disordered" evidence="2">
    <location>
        <begin position="140"/>
        <end position="162"/>
    </location>
</feature>
<feature type="compositionally biased region" description="Basic and acidic residues" evidence="2">
    <location>
        <begin position="140"/>
        <end position="151"/>
    </location>
</feature>
<feature type="binding site" description="covalent" evidence="1">
    <location>
        <position position="128"/>
    </location>
    <ligand>
        <name>heme</name>
        <dbReference type="ChEBI" id="CHEBI:30413"/>
    </ligand>
</feature>
<feature type="binding site" description="axial binding residue" evidence="1">
    <location>
        <position position="132"/>
    </location>
    <ligand>
        <name>heme</name>
        <dbReference type="ChEBI" id="CHEBI:30413"/>
    </ligand>
    <ligandPart>
        <name>Fe</name>
        <dbReference type="ChEBI" id="CHEBI:18248"/>
    </ligandPart>
</feature>
<dbReference type="EMBL" id="CP001340">
    <property type="protein sequence ID" value="ACL96314.1"/>
    <property type="molecule type" value="Genomic_DNA"/>
</dbReference>
<dbReference type="RefSeq" id="WP_010920602.1">
    <property type="nucleotide sequence ID" value="NC_011916.1"/>
</dbReference>
<dbReference type="RefSeq" id="YP_002518222.1">
    <property type="nucleotide sequence ID" value="NC_011916.1"/>
</dbReference>
<dbReference type="SMR" id="B8H1L5"/>
<dbReference type="GeneID" id="7331174"/>
<dbReference type="KEGG" id="ccs:CCNA_02849"/>
<dbReference type="PATRIC" id="fig|565050.3.peg.2781"/>
<dbReference type="HOGENOM" id="CLU_079503_1_1_5"/>
<dbReference type="OrthoDB" id="9793584at2"/>
<dbReference type="PhylomeDB" id="B8H1L5"/>
<dbReference type="Proteomes" id="UP000001364">
    <property type="component" value="Chromosome"/>
</dbReference>
<dbReference type="GO" id="GO:0005886">
    <property type="term" value="C:plasma membrane"/>
    <property type="evidence" value="ECO:0007669"/>
    <property type="project" value="UniProtKB-SubCell"/>
</dbReference>
<dbReference type="GO" id="GO:0020037">
    <property type="term" value="F:heme binding"/>
    <property type="evidence" value="ECO:0007669"/>
    <property type="project" value="InterPro"/>
</dbReference>
<dbReference type="GO" id="GO:0046872">
    <property type="term" value="F:metal ion binding"/>
    <property type="evidence" value="ECO:0007669"/>
    <property type="project" value="UniProtKB-KW"/>
</dbReference>
<dbReference type="GO" id="GO:0017004">
    <property type="term" value="P:cytochrome complex assembly"/>
    <property type="evidence" value="ECO:0007669"/>
    <property type="project" value="UniProtKB-KW"/>
</dbReference>
<dbReference type="Gene3D" id="2.40.50.140">
    <property type="entry name" value="Nucleic acid-binding proteins"/>
    <property type="match status" value="1"/>
</dbReference>
<dbReference type="HAMAP" id="MF_01959">
    <property type="entry name" value="CcmE"/>
    <property type="match status" value="1"/>
</dbReference>
<dbReference type="InterPro" id="IPR004329">
    <property type="entry name" value="CcmE"/>
</dbReference>
<dbReference type="InterPro" id="IPR036127">
    <property type="entry name" value="CcmE-like_sf"/>
</dbReference>
<dbReference type="InterPro" id="IPR012340">
    <property type="entry name" value="NA-bd_OB-fold"/>
</dbReference>
<dbReference type="NCBIfam" id="NF009727">
    <property type="entry name" value="PRK13254.1-1"/>
    <property type="match status" value="1"/>
</dbReference>
<dbReference type="NCBIfam" id="NF009731">
    <property type="entry name" value="PRK13254.1-5"/>
    <property type="match status" value="1"/>
</dbReference>
<dbReference type="PANTHER" id="PTHR34128">
    <property type="entry name" value="CYTOCHROME C-TYPE BIOGENESIS PROTEIN CCME HOMOLOG, MITOCHONDRIAL"/>
    <property type="match status" value="1"/>
</dbReference>
<dbReference type="PANTHER" id="PTHR34128:SF2">
    <property type="entry name" value="CYTOCHROME C-TYPE BIOGENESIS PROTEIN CCME HOMOLOG, MITOCHONDRIAL"/>
    <property type="match status" value="1"/>
</dbReference>
<dbReference type="Pfam" id="PF03100">
    <property type="entry name" value="CcmE"/>
    <property type="match status" value="1"/>
</dbReference>
<dbReference type="SUPFAM" id="SSF82093">
    <property type="entry name" value="Heme chaperone CcmE"/>
    <property type="match status" value="1"/>
</dbReference>
<reference key="1">
    <citation type="journal article" date="2010" name="J. Bacteriol.">
        <title>The genetic basis of laboratory adaptation in Caulobacter crescentus.</title>
        <authorList>
            <person name="Marks M.E."/>
            <person name="Castro-Rojas C.M."/>
            <person name="Teiling C."/>
            <person name="Du L."/>
            <person name="Kapatral V."/>
            <person name="Walunas T.L."/>
            <person name="Crosson S."/>
        </authorList>
    </citation>
    <scope>NUCLEOTIDE SEQUENCE [LARGE SCALE GENOMIC DNA]</scope>
    <source>
        <strain>NA1000 / CB15N</strain>
    </source>
</reference>
<keyword id="KW-0997">Cell inner membrane</keyword>
<keyword id="KW-1003">Cell membrane</keyword>
<keyword id="KW-0201">Cytochrome c-type biogenesis</keyword>
<keyword id="KW-0349">Heme</keyword>
<keyword id="KW-0408">Iron</keyword>
<keyword id="KW-0472">Membrane</keyword>
<keyword id="KW-0479">Metal-binding</keyword>
<keyword id="KW-1185">Reference proteome</keyword>
<keyword id="KW-0735">Signal-anchor</keyword>
<keyword id="KW-0812">Transmembrane</keyword>
<keyword id="KW-1133">Transmembrane helix</keyword>
<evidence type="ECO:0000255" key="1">
    <source>
        <dbReference type="HAMAP-Rule" id="MF_01959"/>
    </source>
</evidence>
<evidence type="ECO:0000256" key="2">
    <source>
        <dbReference type="SAM" id="MobiDB-lite"/>
    </source>
</evidence>